<feature type="signal peptide" evidence="1">
    <location>
        <begin position="1"/>
        <end position="19"/>
    </location>
</feature>
<feature type="chain" id="PRO_0000277813" description="Gliding motility lipoprotein GldH homolog">
    <location>
        <begin position="20"/>
        <end position="162"/>
    </location>
</feature>
<feature type="lipid moiety-binding region" description="N-palmitoyl cysteine" evidence="1">
    <location>
        <position position="20"/>
    </location>
</feature>
<feature type="lipid moiety-binding region" description="S-diacylglycerol cysteine" evidence="1">
    <location>
        <position position="20"/>
    </location>
</feature>
<organism>
    <name type="scientific">Christiangramia forsetii (strain DSM 17595 / CGMCC 1.15422 / KT0803)</name>
    <name type="common">Gramella forsetii</name>
    <dbReference type="NCBI Taxonomy" id="411154"/>
    <lineage>
        <taxon>Bacteria</taxon>
        <taxon>Pseudomonadati</taxon>
        <taxon>Bacteroidota</taxon>
        <taxon>Flavobacteriia</taxon>
        <taxon>Flavobacteriales</taxon>
        <taxon>Flavobacteriaceae</taxon>
        <taxon>Christiangramia</taxon>
    </lineage>
</organism>
<reference key="1">
    <citation type="journal article" date="2006" name="Environ. Microbiol.">
        <title>Whole genome analysis of the marine Bacteroidetes'Gramella forsetii' reveals adaptations to degradation of polymeric organic matter.</title>
        <authorList>
            <person name="Bauer M."/>
            <person name="Kube M."/>
            <person name="Teeling H."/>
            <person name="Richter M."/>
            <person name="Lombardot T."/>
            <person name="Allers E."/>
            <person name="Wuerdemann C.A."/>
            <person name="Quast C."/>
            <person name="Kuhl H."/>
            <person name="Knaust F."/>
            <person name="Woebken D."/>
            <person name="Bischof K."/>
            <person name="Mussmann M."/>
            <person name="Choudhuri J.V."/>
            <person name="Meyer F."/>
            <person name="Reinhardt R."/>
            <person name="Amann R.I."/>
            <person name="Gloeckner F.O."/>
        </authorList>
    </citation>
    <scope>NUCLEOTIDE SEQUENCE [LARGE SCALE GENOMIC DNA]</scope>
    <source>
        <strain>DSM 17595 / CGMCC 1.15422 / KT0803</strain>
    </source>
</reference>
<sequence>MRSAFSVFIFIFTIILFSSCDKKRVYDEYESIHEWHKDSLVNFELDNIDSTKVYDLFINIRNNNDYRYSNLFLITEIKFPQGKVISDTLEYDMTKPNGEWLGIGFGDVKESKLWYKENVKFDESGKYKVSIQQAMRKNGDVDGIQELEGITDVGFRIEKSDN</sequence>
<gene>
    <name type="primary">gldH</name>
    <name type="ordered locus">GFO_3242</name>
</gene>
<proteinExistence type="inferred from homology"/>
<keyword id="KW-1003">Cell membrane</keyword>
<keyword id="KW-0449">Lipoprotein</keyword>
<keyword id="KW-0472">Membrane</keyword>
<keyword id="KW-0564">Palmitate</keyword>
<keyword id="KW-0732">Signal</keyword>
<protein>
    <recommendedName>
        <fullName>Gliding motility lipoprotein GldH homolog</fullName>
    </recommendedName>
</protein>
<comment type="subcellular location">
    <subcellularLocation>
        <location evidence="1">Cell membrane</location>
        <topology evidence="1">Lipid-anchor</topology>
    </subcellularLocation>
</comment>
<comment type="miscellaneous">
    <text>According to PubMed:17107561, motility has not been observed in Gramella forsetii although it possesses genes known to be required for gliding motility.</text>
</comment>
<comment type="sequence caution" evidence="2">
    <conflict type="erroneous initiation">
        <sequence resource="EMBL-CDS" id="CAL68185"/>
    </conflict>
</comment>
<name>GLDH_CHRFK</name>
<evidence type="ECO:0000255" key="1">
    <source>
        <dbReference type="PROSITE-ProRule" id="PRU00303"/>
    </source>
</evidence>
<evidence type="ECO:0000305" key="2"/>
<accession>A0M6E0</accession>
<dbReference type="EMBL" id="CU207366">
    <property type="protein sequence ID" value="CAL68185.1"/>
    <property type="status" value="ALT_INIT"/>
    <property type="molecule type" value="Genomic_DNA"/>
</dbReference>
<dbReference type="RefSeq" id="WP_041250165.1">
    <property type="nucleotide sequence ID" value="NC_008571.1"/>
</dbReference>
<dbReference type="STRING" id="411154.GFO_3242"/>
<dbReference type="KEGG" id="gfo:GFO_3242"/>
<dbReference type="eggNOG" id="ENOG50313I2">
    <property type="taxonomic scope" value="Bacteria"/>
</dbReference>
<dbReference type="HOGENOM" id="CLU_109250_2_0_10"/>
<dbReference type="OrthoDB" id="982482at2"/>
<dbReference type="Proteomes" id="UP000000755">
    <property type="component" value="Chromosome"/>
</dbReference>
<dbReference type="GO" id="GO:0005886">
    <property type="term" value="C:plasma membrane"/>
    <property type="evidence" value="ECO:0007669"/>
    <property type="project" value="UniProtKB-SubCell"/>
</dbReference>
<dbReference type="InterPro" id="IPR020018">
    <property type="entry name" value="Motility-assoc_lipoprot_GldH"/>
</dbReference>
<dbReference type="NCBIfam" id="TIGR03511">
    <property type="entry name" value="GldH_lipo"/>
    <property type="match status" value="1"/>
</dbReference>
<dbReference type="Pfam" id="PF14109">
    <property type="entry name" value="GldH_lipo"/>
    <property type="match status" value="1"/>
</dbReference>
<dbReference type="PROSITE" id="PS51257">
    <property type="entry name" value="PROKAR_LIPOPROTEIN"/>
    <property type="match status" value="1"/>
</dbReference>